<dbReference type="EC" id="2.8.1.6" evidence="1"/>
<dbReference type="EMBL" id="AM889285">
    <property type="protein sequence ID" value="CAP56896.1"/>
    <property type="status" value="ALT_INIT"/>
    <property type="molecule type" value="Genomic_DNA"/>
</dbReference>
<dbReference type="EMBL" id="CP001189">
    <property type="protein sequence ID" value="ACI53122.1"/>
    <property type="status" value="ALT_INIT"/>
    <property type="molecule type" value="Genomic_DNA"/>
</dbReference>
<dbReference type="RefSeq" id="WP_012554931.1">
    <property type="nucleotide sequence ID" value="NC_011365.1"/>
</dbReference>
<dbReference type="SMR" id="A9HRF2"/>
<dbReference type="STRING" id="272568.GDI2953"/>
<dbReference type="KEGG" id="gdi:GDI2953"/>
<dbReference type="KEGG" id="gdj:Gdia_3396"/>
<dbReference type="eggNOG" id="COG0502">
    <property type="taxonomic scope" value="Bacteria"/>
</dbReference>
<dbReference type="HOGENOM" id="CLU_033172_1_2_5"/>
<dbReference type="OrthoDB" id="9786826at2"/>
<dbReference type="UniPathway" id="UPA00078">
    <property type="reaction ID" value="UER00162"/>
</dbReference>
<dbReference type="Proteomes" id="UP000001176">
    <property type="component" value="Chromosome"/>
</dbReference>
<dbReference type="GO" id="GO:0051537">
    <property type="term" value="F:2 iron, 2 sulfur cluster binding"/>
    <property type="evidence" value="ECO:0007669"/>
    <property type="project" value="UniProtKB-KW"/>
</dbReference>
<dbReference type="GO" id="GO:0051539">
    <property type="term" value="F:4 iron, 4 sulfur cluster binding"/>
    <property type="evidence" value="ECO:0007669"/>
    <property type="project" value="UniProtKB-KW"/>
</dbReference>
<dbReference type="GO" id="GO:0004076">
    <property type="term" value="F:biotin synthase activity"/>
    <property type="evidence" value="ECO:0007669"/>
    <property type="project" value="UniProtKB-UniRule"/>
</dbReference>
<dbReference type="GO" id="GO:0005506">
    <property type="term" value="F:iron ion binding"/>
    <property type="evidence" value="ECO:0007669"/>
    <property type="project" value="UniProtKB-UniRule"/>
</dbReference>
<dbReference type="GO" id="GO:0009102">
    <property type="term" value="P:biotin biosynthetic process"/>
    <property type="evidence" value="ECO:0007669"/>
    <property type="project" value="UniProtKB-UniRule"/>
</dbReference>
<dbReference type="CDD" id="cd01335">
    <property type="entry name" value="Radical_SAM"/>
    <property type="match status" value="1"/>
</dbReference>
<dbReference type="FunFam" id="3.20.20.70:FF:000011">
    <property type="entry name" value="Biotin synthase"/>
    <property type="match status" value="1"/>
</dbReference>
<dbReference type="Gene3D" id="3.20.20.70">
    <property type="entry name" value="Aldolase class I"/>
    <property type="match status" value="1"/>
</dbReference>
<dbReference type="HAMAP" id="MF_01694">
    <property type="entry name" value="BioB"/>
    <property type="match status" value="1"/>
</dbReference>
<dbReference type="InterPro" id="IPR013785">
    <property type="entry name" value="Aldolase_TIM"/>
</dbReference>
<dbReference type="InterPro" id="IPR010722">
    <property type="entry name" value="BATS_dom"/>
</dbReference>
<dbReference type="InterPro" id="IPR002684">
    <property type="entry name" value="Biotin_synth/BioAB"/>
</dbReference>
<dbReference type="InterPro" id="IPR024177">
    <property type="entry name" value="Biotin_synthase"/>
</dbReference>
<dbReference type="InterPro" id="IPR006638">
    <property type="entry name" value="Elp3/MiaA/NifB-like_rSAM"/>
</dbReference>
<dbReference type="InterPro" id="IPR007197">
    <property type="entry name" value="rSAM"/>
</dbReference>
<dbReference type="NCBIfam" id="TIGR00433">
    <property type="entry name" value="bioB"/>
    <property type="match status" value="1"/>
</dbReference>
<dbReference type="PANTHER" id="PTHR22976">
    <property type="entry name" value="BIOTIN SYNTHASE"/>
    <property type="match status" value="1"/>
</dbReference>
<dbReference type="PANTHER" id="PTHR22976:SF2">
    <property type="entry name" value="BIOTIN SYNTHASE, MITOCHONDRIAL"/>
    <property type="match status" value="1"/>
</dbReference>
<dbReference type="Pfam" id="PF06968">
    <property type="entry name" value="BATS"/>
    <property type="match status" value="1"/>
</dbReference>
<dbReference type="Pfam" id="PF04055">
    <property type="entry name" value="Radical_SAM"/>
    <property type="match status" value="1"/>
</dbReference>
<dbReference type="PIRSF" id="PIRSF001619">
    <property type="entry name" value="Biotin_synth"/>
    <property type="match status" value="1"/>
</dbReference>
<dbReference type="SFLD" id="SFLDF00272">
    <property type="entry name" value="biotin_synthase"/>
    <property type="match status" value="1"/>
</dbReference>
<dbReference type="SFLD" id="SFLDS00029">
    <property type="entry name" value="Radical_SAM"/>
    <property type="match status" value="1"/>
</dbReference>
<dbReference type="SMART" id="SM00876">
    <property type="entry name" value="BATS"/>
    <property type="match status" value="1"/>
</dbReference>
<dbReference type="SMART" id="SM00729">
    <property type="entry name" value="Elp3"/>
    <property type="match status" value="1"/>
</dbReference>
<dbReference type="SUPFAM" id="SSF102114">
    <property type="entry name" value="Radical SAM enzymes"/>
    <property type="match status" value="1"/>
</dbReference>
<dbReference type="PROSITE" id="PS51918">
    <property type="entry name" value="RADICAL_SAM"/>
    <property type="match status" value="1"/>
</dbReference>
<comment type="function">
    <text evidence="1">Catalyzes the conversion of dethiobiotin (DTB) to biotin by the insertion of a sulfur atom into dethiobiotin via a radical-based mechanism.</text>
</comment>
<comment type="catalytic activity">
    <reaction evidence="1">
        <text>(4R,5S)-dethiobiotin + (sulfur carrier)-SH + 2 reduced [2Fe-2S]-[ferredoxin] + 2 S-adenosyl-L-methionine = (sulfur carrier)-H + biotin + 2 5'-deoxyadenosine + 2 L-methionine + 2 oxidized [2Fe-2S]-[ferredoxin]</text>
        <dbReference type="Rhea" id="RHEA:22060"/>
        <dbReference type="Rhea" id="RHEA-COMP:10000"/>
        <dbReference type="Rhea" id="RHEA-COMP:10001"/>
        <dbReference type="Rhea" id="RHEA-COMP:14737"/>
        <dbReference type="Rhea" id="RHEA-COMP:14739"/>
        <dbReference type="ChEBI" id="CHEBI:17319"/>
        <dbReference type="ChEBI" id="CHEBI:29917"/>
        <dbReference type="ChEBI" id="CHEBI:33737"/>
        <dbReference type="ChEBI" id="CHEBI:33738"/>
        <dbReference type="ChEBI" id="CHEBI:57586"/>
        <dbReference type="ChEBI" id="CHEBI:57844"/>
        <dbReference type="ChEBI" id="CHEBI:59789"/>
        <dbReference type="ChEBI" id="CHEBI:64428"/>
        <dbReference type="ChEBI" id="CHEBI:149473"/>
        <dbReference type="EC" id="2.8.1.6"/>
    </reaction>
</comment>
<comment type="cofactor">
    <cofactor evidence="1">
        <name>[4Fe-4S] cluster</name>
        <dbReference type="ChEBI" id="CHEBI:49883"/>
    </cofactor>
    <text evidence="1">Binds 1 [4Fe-4S] cluster. The cluster is coordinated with 3 cysteines and an exchangeable S-adenosyl-L-methionine.</text>
</comment>
<comment type="cofactor">
    <cofactor evidence="1">
        <name>[2Fe-2S] cluster</name>
        <dbReference type="ChEBI" id="CHEBI:190135"/>
    </cofactor>
    <text evidence="1">Binds 1 [2Fe-2S] cluster. The cluster is coordinated with 3 cysteines and 1 arginine.</text>
</comment>
<comment type="pathway">
    <text evidence="1">Cofactor biosynthesis; biotin biosynthesis; biotin from 7,8-diaminononanoate: step 2/2.</text>
</comment>
<comment type="subunit">
    <text evidence="1">Homodimer.</text>
</comment>
<comment type="similarity">
    <text evidence="1">Belongs to the radical SAM superfamily. Biotin synthase family.</text>
</comment>
<comment type="sequence caution" evidence="3">
    <conflict type="erroneous initiation">
        <sequence resource="EMBL-CDS" id="ACI53122"/>
    </conflict>
</comment>
<comment type="sequence caution" evidence="3">
    <conflict type="erroneous initiation">
        <sequence resource="EMBL-CDS" id="CAP56896"/>
    </conflict>
</comment>
<feature type="chain" id="PRO_0000381409" description="Biotin synthase">
    <location>
        <begin position="1"/>
        <end position="316"/>
    </location>
</feature>
<feature type="domain" description="Radical SAM core" evidence="2">
    <location>
        <begin position="36"/>
        <end position="264"/>
    </location>
</feature>
<feature type="binding site" evidence="1">
    <location>
        <position position="51"/>
    </location>
    <ligand>
        <name>[4Fe-4S] cluster</name>
        <dbReference type="ChEBI" id="CHEBI:49883"/>
        <note>4Fe-4S-S-AdoMet</note>
    </ligand>
</feature>
<feature type="binding site" evidence="1">
    <location>
        <position position="55"/>
    </location>
    <ligand>
        <name>[4Fe-4S] cluster</name>
        <dbReference type="ChEBI" id="CHEBI:49883"/>
        <note>4Fe-4S-S-AdoMet</note>
    </ligand>
</feature>
<feature type="binding site" evidence="1">
    <location>
        <position position="58"/>
    </location>
    <ligand>
        <name>[4Fe-4S] cluster</name>
        <dbReference type="ChEBI" id="CHEBI:49883"/>
        <note>4Fe-4S-S-AdoMet</note>
    </ligand>
</feature>
<feature type="binding site" evidence="1">
    <location>
        <position position="96"/>
    </location>
    <ligand>
        <name>[2Fe-2S] cluster</name>
        <dbReference type="ChEBI" id="CHEBI:190135"/>
    </ligand>
</feature>
<feature type="binding site" evidence="1">
    <location>
        <position position="127"/>
    </location>
    <ligand>
        <name>[2Fe-2S] cluster</name>
        <dbReference type="ChEBI" id="CHEBI:190135"/>
    </ligand>
</feature>
<feature type="binding site" evidence="1">
    <location>
        <position position="187"/>
    </location>
    <ligand>
        <name>[2Fe-2S] cluster</name>
        <dbReference type="ChEBI" id="CHEBI:190135"/>
    </ligand>
</feature>
<feature type="binding site" evidence="1">
    <location>
        <position position="259"/>
    </location>
    <ligand>
        <name>[2Fe-2S] cluster</name>
        <dbReference type="ChEBI" id="CHEBI:190135"/>
    </ligand>
</feature>
<evidence type="ECO:0000255" key="1">
    <source>
        <dbReference type="HAMAP-Rule" id="MF_01694"/>
    </source>
</evidence>
<evidence type="ECO:0000255" key="2">
    <source>
        <dbReference type="PROSITE-ProRule" id="PRU01266"/>
    </source>
</evidence>
<evidence type="ECO:0000305" key="3"/>
<protein>
    <recommendedName>
        <fullName evidence="1">Biotin synthase</fullName>
        <ecNumber evidence="1">2.8.1.6</ecNumber>
    </recommendedName>
</protein>
<accession>A9HRF2</accession>
<accession>B5ZM22</accession>
<keyword id="KW-0001">2Fe-2S</keyword>
<keyword id="KW-0004">4Fe-4S</keyword>
<keyword id="KW-0093">Biotin biosynthesis</keyword>
<keyword id="KW-0408">Iron</keyword>
<keyword id="KW-0411">Iron-sulfur</keyword>
<keyword id="KW-0479">Metal-binding</keyword>
<keyword id="KW-1185">Reference proteome</keyword>
<keyword id="KW-0949">S-adenosyl-L-methionine</keyword>
<keyword id="KW-0808">Transferase</keyword>
<name>BIOB_GLUDA</name>
<reference key="1">
    <citation type="journal article" date="2009" name="BMC Genomics">
        <title>Complete genome sequence of the sugarcane nitrogen-fixing endophyte Gluconacetobacter diazotrophicus Pal5.</title>
        <authorList>
            <person name="Bertalan M."/>
            <person name="Albano R."/>
            <person name="de Padua V."/>
            <person name="Rouws L."/>
            <person name="Rojas C."/>
            <person name="Hemerly A."/>
            <person name="Teixeira K."/>
            <person name="Schwab S."/>
            <person name="Araujo J."/>
            <person name="Oliveira A."/>
            <person name="Franca L."/>
            <person name="Magalhaes V."/>
            <person name="Alqueres S."/>
            <person name="Cardoso A."/>
            <person name="Almeida W."/>
            <person name="Loureiro M.M."/>
            <person name="Nogueira E."/>
            <person name="Cidade D."/>
            <person name="Oliveira D."/>
            <person name="Simao T."/>
            <person name="Macedo J."/>
            <person name="Valadao A."/>
            <person name="Dreschsel M."/>
            <person name="Freitas F."/>
            <person name="Vidal M."/>
            <person name="Guedes H."/>
            <person name="Rodrigues E."/>
            <person name="Meneses C."/>
            <person name="Brioso P."/>
            <person name="Pozzer L."/>
            <person name="Figueiredo D."/>
            <person name="Montano H."/>
            <person name="Junior J."/>
            <person name="de Souza Filho G."/>
            <person name="Martin Quintana Flores V."/>
            <person name="Ferreira B."/>
            <person name="Branco A."/>
            <person name="Gonzalez P."/>
            <person name="Guillobel H."/>
            <person name="Lemos M."/>
            <person name="Seibel L."/>
            <person name="Macedo J."/>
            <person name="Alves-Ferreira M."/>
            <person name="Sachetto-Martins G."/>
            <person name="Coelho A."/>
            <person name="Santos E."/>
            <person name="Amaral G."/>
            <person name="Neves A."/>
            <person name="Pacheco A.B."/>
            <person name="Carvalho D."/>
            <person name="Lery L."/>
            <person name="Bisch P."/>
            <person name="Rossle S.C."/>
            <person name="Urmenyi T."/>
            <person name="Rael Pereira A."/>
            <person name="Silva R."/>
            <person name="Rondinelli E."/>
            <person name="von Kruger W."/>
            <person name="Martins O."/>
            <person name="Baldani J.I."/>
            <person name="Ferreira P.C."/>
        </authorList>
    </citation>
    <scope>NUCLEOTIDE SEQUENCE [LARGE SCALE GENOMIC DNA]</scope>
    <source>
        <strain>ATCC 49037 / DSM 5601 / CCUG 37298 / CIP 103539 / LMG 7603 / PAl5</strain>
    </source>
</reference>
<reference key="2">
    <citation type="journal article" date="2010" name="Stand. Genomic Sci.">
        <title>Two genome sequences of the same bacterial strain, Gluconacetobacter diazotrophicus PAl 5, suggest a new standard in genome sequence submission.</title>
        <authorList>
            <person name="Giongo A."/>
            <person name="Tyler H.L."/>
            <person name="Zipperer U.N."/>
            <person name="Triplett E.W."/>
        </authorList>
    </citation>
    <scope>NUCLEOTIDE SEQUENCE [LARGE SCALE GENOMIC DNA]</scope>
    <source>
        <strain>ATCC 49037 / DSM 5601 / CCUG 37298 / CIP 103539 / LMG 7603 / PAl5</strain>
    </source>
</reference>
<gene>
    <name evidence="1" type="primary">bioB</name>
    <name type="ordered locus">GDI2953</name>
    <name type="ordered locus">Gdia_3396</name>
</gene>
<sequence length="316" mass="34213">MRTDWTRDEIAALIALPFPELMFRAQSVHRARFDPTEIQISTLLSIKTGGCPEDCAYCPQSAKHEDGGVKASRLMAVEAVLKEARAARDAGAARFCMGAAWRSPKDHDLETVCAMVEGVKSLGMETCVTLGMLDDRQAHRLREAGLDYYNHNLDTSPEHYGSIISTRTYQERLDTLAHVRDAGINVCCGGIVGMGENDDDRAGLIASLASLPRHPESVPINLLVRVAGTPLAGADPVDPIDFVRIIAAARIAMPASRVRLAAGREDMTDEAQTLCFLAGANSIFYGEKLLTTPNPEASRDARLLARLGMHTSLAQA</sequence>
<organism>
    <name type="scientific">Gluconacetobacter diazotrophicus (strain ATCC 49037 / DSM 5601 / CCUG 37298 / CIP 103539 / LMG 7603 / PAl5)</name>
    <dbReference type="NCBI Taxonomy" id="272568"/>
    <lineage>
        <taxon>Bacteria</taxon>
        <taxon>Pseudomonadati</taxon>
        <taxon>Pseudomonadota</taxon>
        <taxon>Alphaproteobacteria</taxon>
        <taxon>Acetobacterales</taxon>
        <taxon>Acetobacteraceae</taxon>
        <taxon>Gluconacetobacter</taxon>
    </lineage>
</organism>
<proteinExistence type="inferred from homology"/>